<proteinExistence type="predicted"/>
<keyword id="KW-1185">Reference proteome</keyword>
<accession>Q3EA00</accession>
<name>FB235_ARATH</name>
<reference key="1">
    <citation type="journal article" date="1998" name="Nature">
        <title>Analysis of 1.9 Mb of contiguous sequence from chromosome 4 of Arabidopsis thaliana.</title>
        <authorList>
            <person name="Bevan M."/>
            <person name="Bancroft I."/>
            <person name="Bent E."/>
            <person name="Love K."/>
            <person name="Goodman H.M."/>
            <person name="Dean C."/>
            <person name="Bergkamp R."/>
            <person name="Dirkse W."/>
            <person name="van Staveren M."/>
            <person name="Stiekema W."/>
            <person name="Drost L."/>
            <person name="Ridley P."/>
            <person name="Hudson S.-A."/>
            <person name="Patel K."/>
            <person name="Murphy G."/>
            <person name="Piffanelli P."/>
            <person name="Wedler H."/>
            <person name="Wedler E."/>
            <person name="Wambutt R."/>
            <person name="Weitzenegger T."/>
            <person name="Pohl T."/>
            <person name="Terryn N."/>
            <person name="Gielen J."/>
            <person name="Villarroel R."/>
            <person name="De Clercq R."/>
            <person name="van Montagu M."/>
            <person name="Lecharny A."/>
            <person name="Aubourg S."/>
            <person name="Gy I."/>
            <person name="Kreis M."/>
            <person name="Lao N."/>
            <person name="Kavanagh T."/>
            <person name="Hempel S."/>
            <person name="Kotter P."/>
            <person name="Entian K.-D."/>
            <person name="Rieger M."/>
            <person name="Schaefer M."/>
            <person name="Funk B."/>
            <person name="Mueller-Auer S."/>
            <person name="Silvey M."/>
            <person name="James R."/>
            <person name="Monfort A."/>
            <person name="Pons A."/>
            <person name="Puigdomenech P."/>
            <person name="Douka A."/>
            <person name="Voukelatou E."/>
            <person name="Milioni D."/>
            <person name="Hatzopoulos P."/>
            <person name="Piravandi E."/>
            <person name="Obermaier B."/>
            <person name="Hilbert H."/>
            <person name="Duesterhoeft A."/>
            <person name="Moores T."/>
            <person name="Jones J.D.G."/>
            <person name="Eneva T."/>
            <person name="Palme K."/>
            <person name="Benes V."/>
            <person name="Rechmann S."/>
            <person name="Ansorge W."/>
            <person name="Cooke R."/>
            <person name="Berger C."/>
            <person name="Delseny M."/>
            <person name="Voet M."/>
            <person name="Volckaert G."/>
            <person name="Mewes H.-W."/>
            <person name="Klosterman S."/>
            <person name="Schueller C."/>
            <person name="Chalwatzis N."/>
        </authorList>
    </citation>
    <scope>NUCLEOTIDE SEQUENCE [LARGE SCALE GENOMIC DNA]</scope>
    <source>
        <strain>cv. Columbia</strain>
    </source>
</reference>
<reference key="2">
    <citation type="journal article" date="1999" name="Nature">
        <title>Sequence and analysis of chromosome 4 of the plant Arabidopsis thaliana.</title>
        <authorList>
            <person name="Mayer K.F.X."/>
            <person name="Schueller C."/>
            <person name="Wambutt R."/>
            <person name="Murphy G."/>
            <person name="Volckaert G."/>
            <person name="Pohl T."/>
            <person name="Duesterhoeft A."/>
            <person name="Stiekema W."/>
            <person name="Entian K.-D."/>
            <person name="Terryn N."/>
            <person name="Harris B."/>
            <person name="Ansorge W."/>
            <person name="Brandt P."/>
            <person name="Grivell L.A."/>
            <person name="Rieger M."/>
            <person name="Weichselgartner M."/>
            <person name="de Simone V."/>
            <person name="Obermaier B."/>
            <person name="Mache R."/>
            <person name="Mueller M."/>
            <person name="Kreis M."/>
            <person name="Delseny M."/>
            <person name="Puigdomenech P."/>
            <person name="Watson M."/>
            <person name="Schmidtheini T."/>
            <person name="Reichert B."/>
            <person name="Portetelle D."/>
            <person name="Perez-Alonso M."/>
            <person name="Boutry M."/>
            <person name="Bancroft I."/>
            <person name="Vos P."/>
            <person name="Hoheisel J."/>
            <person name="Zimmermann W."/>
            <person name="Wedler H."/>
            <person name="Ridley P."/>
            <person name="Langham S.-A."/>
            <person name="McCullagh B."/>
            <person name="Bilham L."/>
            <person name="Robben J."/>
            <person name="van der Schueren J."/>
            <person name="Grymonprez B."/>
            <person name="Chuang Y.-J."/>
            <person name="Vandenbussche F."/>
            <person name="Braeken M."/>
            <person name="Weltjens I."/>
            <person name="Voet M."/>
            <person name="Bastiaens I."/>
            <person name="Aert R."/>
            <person name="Defoor E."/>
            <person name="Weitzenegger T."/>
            <person name="Bothe G."/>
            <person name="Ramsperger U."/>
            <person name="Hilbert H."/>
            <person name="Braun M."/>
            <person name="Holzer E."/>
            <person name="Brandt A."/>
            <person name="Peters S."/>
            <person name="van Staveren M."/>
            <person name="Dirkse W."/>
            <person name="Mooijman P."/>
            <person name="Klein Lankhorst R."/>
            <person name="Rose M."/>
            <person name="Hauf J."/>
            <person name="Koetter P."/>
            <person name="Berneiser S."/>
            <person name="Hempel S."/>
            <person name="Feldpausch M."/>
            <person name="Lamberth S."/>
            <person name="Van den Daele H."/>
            <person name="De Keyser A."/>
            <person name="Buysshaert C."/>
            <person name="Gielen J."/>
            <person name="Villarroel R."/>
            <person name="De Clercq R."/>
            <person name="van Montagu M."/>
            <person name="Rogers J."/>
            <person name="Cronin A."/>
            <person name="Quail M.A."/>
            <person name="Bray-Allen S."/>
            <person name="Clark L."/>
            <person name="Doggett J."/>
            <person name="Hall S."/>
            <person name="Kay M."/>
            <person name="Lennard N."/>
            <person name="McLay K."/>
            <person name="Mayes R."/>
            <person name="Pettett A."/>
            <person name="Rajandream M.A."/>
            <person name="Lyne M."/>
            <person name="Benes V."/>
            <person name="Rechmann S."/>
            <person name="Borkova D."/>
            <person name="Bloecker H."/>
            <person name="Scharfe M."/>
            <person name="Grimm M."/>
            <person name="Loehnert T.-H."/>
            <person name="Dose S."/>
            <person name="de Haan M."/>
            <person name="Maarse A.C."/>
            <person name="Schaefer M."/>
            <person name="Mueller-Auer S."/>
            <person name="Gabel C."/>
            <person name="Fuchs M."/>
            <person name="Fartmann B."/>
            <person name="Granderath K."/>
            <person name="Dauner D."/>
            <person name="Herzl A."/>
            <person name="Neumann S."/>
            <person name="Argiriou A."/>
            <person name="Vitale D."/>
            <person name="Liguori R."/>
            <person name="Piravandi E."/>
            <person name="Massenet O."/>
            <person name="Quigley F."/>
            <person name="Clabauld G."/>
            <person name="Muendlein A."/>
            <person name="Felber R."/>
            <person name="Schnabl S."/>
            <person name="Hiller R."/>
            <person name="Schmidt W."/>
            <person name="Lecharny A."/>
            <person name="Aubourg S."/>
            <person name="Chefdor F."/>
            <person name="Cooke R."/>
            <person name="Berger C."/>
            <person name="Monfort A."/>
            <person name="Casacuberta E."/>
            <person name="Gibbons T."/>
            <person name="Weber N."/>
            <person name="Vandenbol M."/>
            <person name="Bargues M."/>
            <person name="Terol J."/>
            <person name="Torres A."/>
            <person name="Perez-Perez A."/>
            <person name="Purnelle B."/>
            <person name="Bent E."/>
            <person name="Johnson S."/>
            <person name="Tacon D."/>
            <person name="Jesse T."/>
            <person name="Heijnen L."/>
            <person name="Schwarz S."/>
            <person name="Scholler P."/>
            <person name="Heber S."/>
            <person name="Francs P."/>
            <person name="Bielke C."/>
            <person name="Frishman D."/>
            <person name="Haase D."/>
            <person name="Lemcke K."/>
            <person name="Mewes H.-W."/>
            <person name="Stocker S."/>
            <person name="Zaccaria P."/>
            <person name="Bevan M."/>
            <person name="Wilson R.K."/>
            <person name="de la Bastide M."/>
            <person name="Habermann K."/>
            <person name="Parnell L."/>
            <person name="Dedhia N."/>
            <person name="Gnoj L."/>
            <person name="Schutz K."/>
            <person name="Huang E."/>
            <person name="Spiegel L."/>
            <person name="Sekhon M."/>
            <person name="Murray J."/>
            <person name="Sheet P."/>
            <person name="Cordes M."/>
            <person name="Abu-Threideh J."/>
            <person name="Stoneking T."/>
            <person name="Kalicki J."/>
            <person name="Graves T."/>
            <person name="Harmon G."/>
            <person name="Edwards J."/>
            <person name="Latreille P."/>
            <person name="Courtney L."/>
            <person name="Cloud J."/>
            <person name="Abbott A."/>
            <person name="Scott K."/>
            <person name="Johnson D."/>
            <person name="Minx P."/>
            <person name="Bentley D."/>
            <person name="Fulton B."/>
            <person name="Miller N."/>
            <person name="Greco T."/>
            <person name="Kemp K."/>
            <person name="Kramer J."/>
            <person name="Fulton L."/>
            <person name="Mardis E."/>
            <person name="Dante M."/>
            <person name="Pepin K."/>
            <person name="Hillier L.W."/>
            <person name="Nelson J."/>
            <person name="Spieth J."/>
            <person name="Ryan E."/>
            <person name="Andrews S."/>
            <person name="Geisel C."/>
            <person name="Layman D."/>
            <person name="Du H."/>
            <person name="Ali J."/>
            <person name="Berghoff A."/>
            <person name="Jones K."/>
            <person name="Drone K."/>
            <person name="Cotton M."/>
            <person name="Joshu C."/>
            <person name="Antonoiu B."/>
            <person name="Zidanic M."/>
            <person name="Strong C."/>
            <person name="Sun H."/>
            <person name="Lamar B."/>
            <person name="Yordan C."/>
            <person name="Ma P."/>
            <person name="Zhong J."/>
            <person name="Preston R."/>
            <person name="Vil D."/>
            <person name="Shekher M."/>
            <person name="Matero A."/>
            <person name="Shah R."/>
            <person name="Swaby I.K."/>
            <person name="O'Shaughnessy A."/>
            <person name="Rodriguez M."/>
            <person name="Hoffman J."/>
            <person name="Till S."/>
            <person name="Granat S."/>
            <person name="Shohdy N."/>
            <person name="Hasegawa A."/>
            <person name="Hameed A."/>
            <person name="Lodhi M."/>
            <person name="Johnson A."/>
            <person name="Chen E."/>
            <person name="Marra M.A."/>
            <person name="Martienssen R."/>
            <person name="McCombie W.R."/>
        </authorList>
    </citation>
    <scope>NUCLEOTIDE SEQUENCE [LARGE SCALE GENOMIC DNA]</scope>
    <source>
        <strain>cv. Columbia</strain>
    </source>
</reference>
<reference key="3">
    <citation type="journal article" date="2017" name="Plant J.">
        <title>Araport11: a complete reannotation of the Arabidopsis thaliana reference genome.</title>
        <authorList>
            <person name="Cheng C.Y."/>
            <person name="Krishnakumar V."/>
            <person name="Chan A.P."/>
            <person name="Thibaud-Nissen F."/>
            <person name="Schobel S."/>
            <person name="Town C.D."/>
        </authorList>
    </citation>
    <scope>GENOME REANNOTATION</scope>
    <source>
        <strain>cv. Columbia</strain>
    </source>
</reference>
<evidence type="ECO:0000305" key="1"/>
<gene>
    <name type="ordered locus">At4g17565</name>
    <name type="ORF">dl4820c</name>
    <name type="ORF">FCAALL.44</name>
</gene>
<protein>
    <recommendedName>
        <fullName>Putative F-box protein At4g17565</fullName>
    </recommendedName>
</protein>
<sequence>MDQSDKNPNRRLRVIPKWSELCPDLLRSIFEQLSFTNLNRAKLVCRSWNSASRGCVPKRNQIPWMILFPQKSENNSSNNCVLFVPDDNDKVYKTRDLGVDFAQSICLATYGSWLLMFNHLRNLYILNPLTLERIDLPHSTSINPNMCYPNFKYYRSACLWINNITKDYLVVWPIYNKCFFTKKGDDTWRFAPACHIRMKDQIIYNHKDHKVYQYASYGFIYVWDFSSDIPHVDKHLPAVSFISGREIGDKNKYYRISHQMVMSLSGEVVVVKIMHYYDLSRWRFRIFELNPLTQRWVKVDSLGDAAIILDMGITVVAKDIPGIKKNSIYFSGLNHPLTDPECRFVYDLTTGTMEPLPQCVLSSMLFSDSRWFLPGFTS</sequence>
<dbReference type="EMBL" id="Z97343">
    <property type="protein sequence ID" value="CAB10537.1"/>
    <property type="status" value="ALT_SEQ"/>
    <property type="molecule type" value="Genomic_DNA"/>
</dbReference>
<dbReference type="EMBL" id="AL161546">
    <property type="protein sequence ID" value="CAB78760.1"/>
    <property type="status" value="ALT_SEQ"/>
    <property type="molecule type" value="Genomic_DNA"/>
</dbReference>
<dbReference type="EMBL" id="CP002687">
    <property type="protein sequence ID" value="AEE83911.1"/>
    <property type="molecule type" value="Genomic_DNA"/>
</dbReference>
<dbReference type="RefSeq" id="NP_193490.1">
    <property type="nucleotide sequence ID" value="NM_117863.1"/>
</dbReference>
<dbReference type="FunCoup" id="Q3EA00">
    <property type="interactions" value="33"/>
</dbReference>
<dbReference type="PaxDb" id="3702-AT4G17565.1"/>
<dbReference type="EnsemblPlants" id="AT4G17565.1">
    <property type="protein sequence ID" value="AT4G17565.1"/>
    <property type="gene ID" value="AT4G17565"/>
</dbReference>
<dbReference type="GeneID" id="827473"/>
<dbReference type="Gramene" id="AT4G17565.1">
    <property type="protein sequence ID" value="AT4G17565.1"/>
    <property type="gene ID" value="AT4G17565"/>
</dbReference>
<dbReference type="KEGG" id="ath:AT4G17565"/>
<dbReference type="Araport" id="AT4G17565"/>
<dbReference type="TAIR" id="AT4G17565">
    <property type="gene designation" value="ATFDB26"/>
</dbReference>
<dbReference type="eggNOG" id="ENOG502R6Z0">
    <property type="taxonomic scope" value="Eukaryota"/>
</dbReference>
<dbReference type="HOGENOM" id="CLU_019286_7_1_1"/>
<dbReference type="InParanoid" id="Q3EA00"/>
<dbReference type="OMA" id="RSACLWI"/>
<dbReference type="PhylomeDB" id="Q3EA00"/>
<dbReference type="PRO" id="PR:Q3EA00"/>
<dbReference type="Proteomes" id="UP000006548">
    <property type="component" value="Chromosome 4"/>
</dbReference>
<dbReference type="ExpressionAtlas" id="Q3EA00">
    <property type="expression patterns" value="baseline and differential"/>
</dbReference>
<dbReference type="CDD" id="cd09917">
    <property type="entry name" value="F-box_SF"/>
    <property type="match status" value="1"/>
</dbReference>
<dbReference type="Gene3D" id="1.20.1280.50">
    <property type="match status" value="1"/>
</dbReference>
<dbReference type="InterPro" id="IPR036047">
    <property type="entry name" value="F-box-like_dom_sf"/>
</dbReference>
<dbReference type="InterPro" id="IPR050942">
    <property type="entry name" value="F-box_BR-signaling"/>
</dbReference>
<dbReference type="InterPro" id="IPR001810">
    <property type="entry name" value="F-box_dom"/>
</dbReference>
<dbReference type="InterPro" id="IPR005174">
    <property type="entry name" value="KIB1-4_b-propeller"/>
</dbReference>
<dbReference type="PANTHER" id="PTHR44259:SF29">
    <property type="entry name" value="F-BOX DOMAIN-CONTAINING PROTEIN"/>
    <property type="match status" value="1"/>
</dbReference>
<dbReference type="PANTHER" id="PTHR44259">
    <property type="entry name" value="OS07G0183000 PROTEIN-RELATED"/>
    <property type="match status" value="1"/>
</dbReference>
<dbReference type="Pfam" id="PF03478">
    <property type="entry name" value="Beta-prop_KIB1-4"/>
    <property type="match status" value="1"/>
</dbReference>
<dbReference type="Pfam" id="PF00646">
    <property type="entry name" value="F-box"/>
    <property type="match status" value="1"/>
</dbReference>
<dbReference type="SMART" id="SM00256">
    <property type="entry name" value="FBOX"/>
    <property type="match status" value="1"/>
</dbReference>
<dbReference type="SUPFAM" id="SSF81383">
    <property type="entry name" value="F-box domain"/>
    <property type="match status" value="1"/>
</dbReference>
<comment type="sequence caution" evidence="1">
    <conflict type="erroneous gene model prediction">
        <sequence resource="EMBL-CDS" id="CAB10537"/>
    </conflict>
    <text>The predicted gene At4g17570 has been split into 2 genes: At4g17565 and At4g17570.</text>
</comment>
<comment type="sequence caution" evidence="1">
    <conflict type="erroneous gene model prediction">
        <sequence resource="EMBL-CDS" id="CAB78760"/>
    </conflict>
    <text>The predicted gene At4g17570 has been split into 2 genes: At4g17565 and At4g17570.</text>
</comment>
<feature type="chain" id="PRO_0000274953" description="Putative F-box protein At4g17565">
    <location>
        <begin position="1"/>
        <end position="378"/>
    </location>
</feature>
<feature type="domain" description="F-box">
    <location>
        <begin position="16"/>
        <end position="63"/>
    </location>
</feature>
<organism>
    <name type="scientific">Arabidopsis thaliana</name>
    <name type="common">Mouse-ear cress</name>
    <dbReference type="NCBI Taxonomy" id="3702"/>
    <lineage>
        <taxon>Eukaryota</taxon>
        <taxon>Viridiplantae</taxon>
        <taxon>Streptophyta</taxon>
        <taxon>Embryophyta</taxon>
        <taxon>Tracheophyta</taxon>
        <taxon>Spermatophyta</taxon>
        <taxon>Magnoliopsida</taxon>
        <taxon>eudicotyledons</taxon>
        <taxon>Gunneridae</taxon>
        <taxon>Pentapetalae</taxon>
        <taxon>rosids</taxon>
        <taxon>malvids</taxon>
        <taxon>Brassicales</taxon>
        <taxon>Brassicaceae</taxon>
        <taxon>Camelineae</taxon>
        <taxon>Arabidopsis</taxon>
    </lineage>
</organism>